<evidence type="ECO:0000250" key="1">
    <source>
        <dbReference type="UniProtKB" id="Q5AR34"/>
    </source>
</evidence>
<evidence type="ECO:0000269" key="2">
    <source>
    </source>
</evidence>
<evidence type="ECO:0000303" key="3">
    <source>
    </source>
</evidence>
<evidence type="ECO:0000305" key="4"/>
<reference key="1">
    <citation type="journal article" date="2021" name="J. Am. Chem. Soc.">
        <title>Biosynthesis of the Immunosuppressant (-)-FR901483.</title>
        <authorList>
            <person name="Zhang Z."/>
            <person name="Tamura Y."/>
            <person name="Tang M."/>
            <person name="Qiao T."/>
            <person name="Sato M."/>
            <person name="Otsu Y."/>
            <person name="Sasamura S."/>
            <person name="Taniguchi M."/>
            <person name="Watanabe K."/>
            <person name="Tang Y."/>
        </authorList>
    </citation>
    <scope>NUCLEOTIDE SEQUENCE [GENOMIC DNA]</scope>
    <scope>FUNCTION</scope>
    <scope>CATALYTIC ACTIVITY</scope>
    <scope>PATHWAY</scope>
    <source>
        <strain>11231</strain>
    </source>
</reference>
<keyword id="KW-0223">Dioxygenase</keyword>
<keyword id="KW-0408">Iron</keyword>
<keyword id="KW-0479">Metal-binding</keyword>
<keyword id="KW-0560">Oxidoreductase</keyword>
<sequence length="306" mass="33818">MERIPASAGPEAIFEAFRRDGIIVIEGFLTPDQVQRFSSEVQPGLDELTVGAPEHDEAAQTATVMDEMIGEKTKRLGQLVTRSAVFRHELLEHELMHALLEKVFVEGPMDGYWMNASEVIEIAPGSNAQPIHRDQELYDVWNRAGPAMPEAICNFISALTPFTALNGATQVAPGTHRDFTSDHLLDRDFQGRSDLKTIPAVMNPGDCIFFSGKILHGGGANHTADELRRGLAMSFIRRILTPEEAHPLSVSREIVDTMTYRGQAMLGFRSQWPVIEGVPNFYWTHQGSEIGSHIGLKEKTSGSVVL</sequence>
<organism>
    <name type="scientific">Cladobotryum sp</name>
    <dbReference type="NCBI Taxonomy" id="2040732"/>
    <lineage>
        <taxon>Eukaryota</taxon>
        <taxon>Fungi</taxon>
        <taxon>Dikarya</taxon>
        <taxon>Ascomycota</taxon>
        <taxon>Pezizomycotina</taxon>
        <taxon>Sordariomycetes</taxon>
        <taxon>Hypocreomycetidae</taxon>
        <taxon>Hypocreales</taxon>
        <taxon>Hypocreaceae</taxon>
        <taxon>Cladobotryum</taxon>
    </lineage>
</organism>
<name>FRZG_CLASX</name>
<accession>A0A7T8F1J7</accession>
<comment type="function">
    <text evidence="2">Dioxygenase; part of the gene cluster that mediates the biosynthesis of the alkaloid (-)-FR901483, a potent immunosuppressant that shows efficacy in animal models and a probable inhibitor of purine nucleotide biosynthesis by targeting phosphoribosylpyrophosphate amidotransferase (PPAT) (PubMed:33372776). Within the pathway, FrzG cleaves the C9-N10' bond to yield a conjugated iminium. FrzG is also able to catalyze the dehydrogenation between C7 and C8 which leads to a shunt product (PubMed:33372776). The biosynthesis of (-)-FR901483 starts with the condensation of two L-tyrosines to yield (S,S)-dityrosyl-piperazine. This process occurs in 3 steps with the non-canonical nonribosomal peptide synthetase FrzA catalyzing the reduction of L-tyrosine into L-tyrosinal, the spontaneous condensation of 2 L-tyrosinal units, and the subsequent reduction by the NmrA-like family domain-containing oxidoreductase FrzB. The cytochrome P450 monooxygenase FrzC then performs coupling between N10 and C1' to morph the piperazine into a 1,4-diazabicyclo[3.2.1]octane spiro-fused to a 2,5-cyclohexadienone. The dienone portion is further reduced to cyclohexanone by the flavin-dependent reductase FrzD. The methyltranserases (MTs) FrzE and FrzF are then involved in the methylation at the C10' amine and the C4 phenolic oxygen, respectively. The order of the two MTs appear to be interchangeable. Cleavage of the C9-N10' bond by the dioxygenase FrzG then leads to formation of a conjugated iminium. In addition to the oxidation of C9, an additional dehydrogenation between C7 and C8 can occur to give a likely shunt product. The next biosynthetic step is the intramolecular aldol condensation catalyzed by the newly identified aldolase FrzH to yield an aza-tricyclic product with the formation of a C9-C3' bond (PubMed:33372776). The short-chain dehydrogenase/reductase FrzI then produces dephospho-(-)-FR901483 that is phosphorylated at C4'-OH into (-)-FR901483 by the phosphotransferase FrzJ (PubMed:33372776).</text>
</comment>
<comment type="catalytic activity">
    <reaction evidence="2">
        <text>(1S,4S)-4-[(4-methoxyphenyl)methyl]-2-methyl-2,5-diazaspiro[bicyclo[3.2.1]octane-6,1'-cyclohexan]-4'-one + 2-oxoglutarate + O2 = (2S)-3-(4-methoxyphenyl)-2-[(3S)-3-(methylamino)-8-oxo-1-azaspiro[4.5]decan-1-yl]propanal + succinate + CO2</text>
        <dbReference type="Rhea" id="RHEA:83603"/>
        <dbReference type="ChEBI" id="CHEBI:15379"/>
        <dbReference type="ChEBI" id="CHEBI:16526"/>
        <dbReference type="ChEBI" id="CHEBI:16810"/>
        <dbReference type="ChEBI" id="CHEBI:30031"/>
        <dbReference type="ChEBI" id="CHEBI:233178"/>
        <dbReference type="ChEBI" id="CHEBI:233179"/>
    </reaction>
    <physiologicalReaction direction="left-to-right" evidence="2">
        <dbReference type="Rhea" id="RHEA:83604"/>
    </physiologicalReaction>
</comment>
<comment type="cofactor">
    <cofactor evidence="1">
        <name>Fe cation</name>
        <dbReference type="ChEBI" id="CHEBI:24875"/>
    </cofactor>
</comment>
<comment type="pathway">
    <text evidence="2">Secondary metabolite biosynthesis.</text>
</comment>
<comment type="subunit">
    <text evidence="1">Homodimer.</text>
</comment>
<comment type="similarity">
    <text evidence="4">Belongs to the PhyH family.</text>
</comment>
<dbReference type="EC" id="1.14.11.-" evidence="2"/>
<dbReference type="EMBL" id="MW322046">
    <property type="protein sequence ID" value="QQO98479.1"/>
    <property type="molecule type" value="Genomic_DNA"/>
</dbReference>
<dbReference type="GO" id="GO:0051213">
    <property type="term" value="F:dioxygenase activity"/>
    <property type="evidence" value="ECO:0007669"/>
    <property type="project" value="UniProtKB-KW"/>
</dbReference>
<dbReference type="Gene3D" id="2.60.120.620">
    <property type="entry name" value="q2cbj1_9rhob like domain"/>
    <property type="match status" value="1"/>
</dbReference>
<dbReference type="InterPro" id="IPR008775">
    <property type="entry name" value="Phytyl_CoA_dOase-like"/>
</dbReference>
<dbReference type="PANTHER" id="PTHR20883:SF19">
    <property type="entry name" value="MULTIFUNCTIONAL DIOXYGENASE AUSE"/>
    <property type="match status" value="1"/>
</dbReference>
<dbReference type="PANTHER" id="PTHR20883">
    <property type="entry name" value="PHYTANOYL-COA DIOXYGENASE DOMAIN CONTAINING 1"/>
    <property type="match status" value="1"/>
</dbReference>
<dbReference type="Pfam" id="PF05721">
    <property type="entry name" value="PhyH"/>
    <property type="match status" value="1"/>
</dbReference>
<dbReference type="SUPFAM" id="SSF51197">
    <property type="entry name" value="Clavaminate synthase-like"/>
    <property type="match status" value="1"/>
</dbReference>
<protein>
    <recommendedName>
        <fullName evidence="3">Dioxygenase FrzG</fullName>
        <ecNumber evidence="2">1.14.11.-</ecNumber>
    </recommendedName>
    <alternativeName>
        <fullName evidence="3">FR901483 biosynthesis clusters protein G</fullName>
    </alternativeName>
</protein>
<proteinExistence type="evidence at protein level"/>
<feature type="chain" id="PRO_0000462336" description="Dioxygenase FrzG">
    <location>
        <begin position="1"/>
        <end position="306"/>
    </location>
</feature>
<feature type="binding site" evidence="1">
    <location>
        <position position="132"/>
    </location>
    <ligand>
        <name>Fe cation</name>
        <dbReference type="ChEBI" id="CHEBI:24875"/>
    </ligand>
</feature>
<feature type="binding site" evidence="1">
    <location>
        <position position="134"/>
    </location>
    <ligand>
        <name>Fe cation</name>
        <dbReference type="ChEBI" id="CHEBI:24875"/>
    </ligand>
</feature>
<feature type="binding site" evidence="1">
    <location>
        <position position="216"/>
    </location>
    <ligand>
        <name>Fe cation</name>
        <dbReference type="ChEBI" id="CHEBI:24875"/>
    </ligand>
</feature>
<feature type="site" description="Important for reaction specificity" evidence="1">
    <location>
        <position position="234"/>
    </location>
</feature>
<gene>
    <name evidence="3" type="primary">FrzA</name>
</gene>